<keyword id="KW-0007">Acetylation</keyword>
<keyword id="KW-0106">Calcium</keyword>
<keyword id="KW-0148">Chlorophyll</keyword>
<keyword id="KW-0150">Chloroplast</keyword>
<keyword id="KW-0157">Chromophore</keyword>
<keyword id="KW-0249">Electron transport</keyword>
<keyword id="KW-0359">Herbicide resistance</keyword>
<keyword id="KW-0408">Iron</keyword>
<keyword id="KW-0460">Magnesium</keyword>
<keyword id="KW-0464">Manganese</keyword>
<keyword id="KW-0472">Membrane</keyword>
<keyword id="KW-0479">Metal-binding</keyword>
<keyword id="KW-0560">Oxidoreductase</keyword>
<keyword id="KW-0597">Phosphoprotein</keyword>
<keyword id="KW-0602">Photosynthesis</keyword>
<keyword id="KW-0604">Photosystem II</keyword>
<keyword id="KW-0934">Plastid</keyword>
<keyword id="KW-0793">Thylakoid</keyword>
<keyword id="KW-0812">Transmembrane</keyword>
<keyword id="KW-1133">Transmembrane helix</keyword>
<keyword id="KW-0813">Transport</keyword>
<geneLocation type="chloroplast"/>
<accession>Q2WGI0</accession>
<name>PSBA_SELUN</name>
<feature type="initiator methionine" description="Removed" evidence="1">
    <location>
        <position position="1"/>
    </location>
</feature>
<feature type="chain" id="PRO_0000340066" description="Photosystem II protein D1" evidence="1">
    <location>
        <begin position="2"/>
        <end position="344"/>
    </location>
</feature>
<feature type="propeptide" id="PRO_0000340067" evidence="1">
    <location>
        <begin position="345"/>
        <end position="354"/>
    </location>
</feature>
<feature type="transmembrane region" description="Helical" evidence="1">
    <location>
        <begin position="29"/>
        <end position="46"/>
    </location>
</feature>
<feature type="transmembrane region" description="Helical" evidence="1">
    <location>
        <begin position="118"/>
        <end position="133"/>
    </location>
</feature>
<feature type="transmembrane region" description="Helical" evidence="1">
    <location>
        <begin position="142"/>
        <end position="156"/>
    </location>
</feature>
<feature type="transmembrane region" description="Helical" evidence="1">
    <location>
        <begin position="197"/>
        <end position="218"/>
    </location>
</feature>
<feature type="transmembrane region" description="Helical" evidence="1">
    <location>
        <begin position="274"/>
        <end position="288"/>
    </location>
</feature>
<feature type="binding site" description="axial binding residue" evidence="1">
    <location>
        <position position="118"/>
    </location>
    <ligand>
        <name>chlorophyll a</name>
        <dbReference type="ChEBI" id="CHEBI:58416"/>
        <label>ChlzD1</label>
    </ligand>
    <ligandPart>
        <name>Mg</name>
        <dbReference type="ChEBI" id="CHEBI:25107"/>
    </ligandPart>
</feature>
<feature type="binding site" evidence="1">
    <location>
        <position position="126"/>
    </location>
    <ligand>
        <name>pheophytin a</name>
        <dbReference type="ChEBI" id="CHEBI:136840"/>
        <label>D1</label>
    </ligand>
</feature>
<feature type="binding site" evidence="1">
    <location>
        <position position="170"/>
    </location>
    <ligand>
        <name>[CaMn4O5] cluster</name>
        <dbReference type="ChEBI" id="CHEBI:189552"/>
    </ligand>
</feature>
<feature type="binding site" evidence="1">
    <location>
        <position position="189"/>
    </location>
    <ligand>
        <name>[CaMn4O5] cluster</name>
        <dbReference type="ChEBI" id="CHEBI:189552"/>
    </ligand>
</feature>
<feature type="binding site" description="axial binding residue" evidence="1">
    <location>
        <position position="198"/>
    </location>
    <ligand>
        <name>chlorophyll a</name>
        <dbReference type="ChEBI" id="CHEBI:58416"/>
        <label>PD1</label>
    </ligand>
    <ligandPart>
        <name>Mg</name>
        <dbReference type="ChEBI" id="CHEBI:25107"/>
    </ligandPart>
</feature>
<feature type="binding site" evidence="1">
    <location>
        <position position="215"/>
    </location>
    <ligand>
        <name>a quinone</name>
        <dbReference type="ChEBI" id="CHEBI:132124"/>
        <label>B</label>
    </ligand>
</feature>
<feature type="binding site" evidence="1">
    <location>
        <position position="215"/>
    </location>
    <ligand>
        <name>Fe cation</name>
        <dbReference type="ChEBI" id="CHEBI:24875"/>
        <note>ligand shared with heterodimeric partner</note>
    </ligand>
</feature>
<feature type="binding site" evidence="1">
    <location>
        <begin position="264"/>
        <end position="265"/>
    </location>
    <ligand>
        <name>a quinone</name>
        <dbReference type="ChEBI" id="CHEBI:132124"/>
        <label>B</label>
    </ligand>
</feature>
<feature type="binding site" evidence="1">
    <location>
        <position position="272"/>
    </location>
    <ligand>
        <name>Fe cation</name>
        <dbReference type="ChEBI" id="CHEBI:24875"/>
        <note>ligand shared with heterodimeric partner</note>
    </ligand>
</feature>
<feature type="binding site" evidence="1">
    <location>
        <position position="332"/>
    </location>
    <ligand>
        <name>[CaMn4O5] cluster</name>
        <dbReference type="ChEBI" id="CHEBI:189552"/>
    </ligand>
</feature>
<feature type="binding site" evidence="1">
    <location>
        <position position="333"/>
    </location>
    <ligand>
        <name>[CaMn4O5] cluster</name>
        <dbReference type="ChEBI" id="CHEBI:189552"/>
    </ligand>
</feature>
<feature type="binding site" evidence="1">
    <location>
        <position position="342"/>
    </location>
    <ligand>
        <name>[CaMn4O5] cluster</name>
        <dbReference type="ChEBI" id="CHEBI:189552"/>
    </ligand>
</feature>
<feature type="binding site" evidence="1">
    <location>
        <position position="344"/>
    </location>
    <ligand>
        <name>[CaMn4O5] cluster</name>
        <dbReference type="ChEBI" id="CHEBI:189552"/>
    </ligand>
</feature>
<feature type="site" description="Tyrosine radical intermediate" evidence="1">
    <location>
        <position position="161"/>
    </location>
</feature>
<feature type="site" description="Stabilizes free radical intermediate" evidence="1">
    <location>
        <position position="190"/>
    </location>
</feature>
<feature type="site" description="Cleavage; by CTPA" evidence="1">
    <location>
        <begin position="344"/>
        <end position="345"/>
    </location>
</feature>
<feature type="modified residue" description="N-acetylthreonine" evidence="1">
    <location>
        <position position="2"/>
    </location>
</feature>
<feature type="modified residue" description="Phosphothreonine" evidence="1">
    <location>
        <position position="2"/>
    </location>
</feature>
<protein>
    <recommendedName>
        <fullName evidence="1">Photosystem II protein D1</fullName>
        <shortName evidence="1">PSII D1 protein</shortName>
        <ecNumber evidence="1">1.10.3.9</ecNumber>
    </recommendedName>
    <alternativeName>
        <fullName evidence="1">Photosystem II Q(B) protein</fullName>
    </alternativeName>
</protein>
<reference key="1">
    <citation type="journal article" date="2007" name="J. Plant Res.">
        <title>The chloroplast genome from a lycophyte (microphyllophyte), Selaginella uncinata, has a unique inversion, transpositions and many gene losses.</title>
        <authorList>
            <person name="Tsuji S."/>
            <person name="Ueda K."/>
            <person name="Nishiyama T."/>
            <person name="Hasebe M."/>
            <person name="Yoshikawa S."/>
            <person name="Konagaya A."/>
            <person name="Nishiuchi T."/>
            <person name="Yamaguchi K."/>
        </authorList>
    </citation>
    <scope>NUCLEOTIDE SEQUENCE [LARGE SCALE GENOMIC DNA]</scope>
</reference>
<dbReference type="EC" id="1.10.3.9" evidence="1"/>
<dbReference type="EMBL" id="AB197035">
    <property type="protein sequence ID" value="BAE00196.1"/>
    <property type="molecule type" value="Genomic_DNA"/>
</dbReference>
<dbReference type="RefSeq" id="YP_009584171.1">
    <property type="nucleotide sequence ID" value="NC_041575.1"/>
</dbReference>
<dbReference type="SMR" id="Q2WGI0"/>
<dbReference type="GeneID" id="39713311"/>
<dbReference type="GO" id="GO:0009535">
    <property type="term" value="C:chloroplast thylakoid membrane"/>
    <property type="evidence" value="ECO:0007669"/>
    <property type="project" value="UniProtKB-SubCell"/>
</dbReference>
<dbReference type="GO" id="GO:0009523">
    <property type="term" value="C:photosystem II"/>
    <property type="evidence" value="ECO:0007669"/>
    <property type="project" value="UniProtKB-KW"/>
</dbReference>
<dbReference type="GO" id="GO:0016168">
    <property type="term" value="F:chlorophyll binding"/>
    <property type="evidence" value="ECO:0007669"/>
    <property type="project" value="UniProtKB-UniRule"/>
</dbReference>
<dbReference type="GO" id="GO:0045156">
    <property type="term" value="F:electron transporter, transferring electrons within the cyclic electron transport pathway of photosynthesis activity"/>
    <property type="evidence" value="ECO:0007669"/>
    <property type="project" value="InterPro"/>
</dbReference>
<dbReference type="GO" id="GO:0005506">
    <property type="term" value="F:iron ion binding"/>
    <property type="evidence" value="ECO:0007669"/>
    <property type="project" value="UniProtKB-UniRule"/>
</dbReference>
<dbReference type="GO" id="GO:0016682">
    <property type="term" value="F:oxidoreductase activity, acting on diphenols and related substances as donors, oxygen as acceptor"/>
    <property type="evidence" value="ECO:0007669"/>
    <property type="project" value="UniProtKB-UniRule"/>
</dbReference>
<dbReference type="GO" id="GO:0010242">
    <property type="term" value="F:oxygen evolving activity"/>
    <property type="evidence" value="ECO:0007669"/>
    <property type="project" value="UniProtKB-EC"/>
</dbReference>
<dbReference type="GO" id="GO:0009772">
    <property type="term" value="P:photosynthetic electron transport in photosystem II"/>
    <property type="evidence" value="ECO:0007669"/>
    <property type="project" value="InterPro"/>
</dbReference>
<dbReference type="GO" id="GO:0009635">
    <property type="term" value="P:response to herbicide"/>
    <property type="evidence" value="ECO:0007669"/>
    <property type="project" value="UniProtKB-KW"/>
</dbReference>
<dbReference type="CDD" id="cd09289">
    <property type="entry name" value="Photosystem-II_D1"/>
    <property type="match status" value="1"/>
</dbReference>
<dbReference type="FunFam" id="1.20.85.10:FF:000002">
    <property type="entry name" value="Photosystem II protein D1"/>
    <property type="match status" value="1"/>
</dbReference>
<dbReference type="Gene3D" id="1.20.85.10">
    <property type="entry name" value="Photosystem II protein D1-like"/>
    <property type="match status" value="1"/>
</dbReference>
<dbReference type="HAMAP" id="MF_01379">
    <property type="entry name" value="PSII_PsbA_D1"/>
    <property type="match status" value="1"/>
</dbReference>
<dbReference type="InterPro" id="IPR055266">
    <property type="entry name" value="D1/D2"/>
</dbReference>
<dbReference type="InterPro" id="IPR036854">
    <property type="entry name" value="Photo_II_D1/D2_sf"/>
</dbReference>
<dbReference type="InterPro" id="IPR000484">
    <property type="entry name" value="Photo_RC_L/M"/>
</dbReference>
<dbReference type="InterPro" id="IPR055265">
    <property type="entry name" value="Photo_RC_L/M_CS"/>
</dbReference>
<dbReference type="InterPro" id="IPR005867">
    <property type="entry name" value="PSII_D1"/>
</dbReference>
<dbReference type="NCBIfam" id="TIGR01151">
    <property type="entry name" value="psbA"/>
    <property type="match status" value="1"/>
</dbReference>
<dbReference type="PANTHER" id="PTHR33149:SF12">
    <property type="entry name" value="PHOTOSYSTEM II D2 PROTEIN"/>
    <property type="match status" value="1"/>
</dbReference>
<dbReference type="PANTHER" id="PTHR33149">
    <property type="entry name" value="PHOTOSYSTEM II PROTEIN D1"/>
    <property type="match status" value="1"/>
</dbReference>
<dbReference type="Pfam" id="PF00124">
    <property type="entry name" value="Photo_RC"/>
    <property type="match status" value="1"/>
</dbReference>
<dbReference type="PRINTS" id="PR00256">
    <property type="entry name" value="REACTNCENTRE"/>
</dbReference>
<dbReference type="SUPFAM" id="SSF81483">
    <property type="entry name" value="Bacterial photosystem II reaction centre, L and M subunits"/>
    <property type="match status" value="1"/>
</dbReference>
<dbReference type="PROSITE" id="PS00244">
    <property type="entry name" value="REACTION_CENTER"/>
    <property type="match status" value="1"/>
</dbReference>
<proteinExistence type="inferred from homology"/>
<gene>
    <name evidence="1" type="primary">psbA</name>
</gene>
<organism>
    <name type="scientific">Selaginella uncinata</name>
    <name type="common">Blue spike-moss</name>
    <name type="synonym">Lycopodium uncinatum</name>
    <dbReference type="NCBI Taxonomy" id="307165"/>
    <lineage>
        <taxon>Eukaryota</taxon>
        <taxon>Viridiplantae</taxon>
        <taxon>Streptophyta</taxon>
        <taxon>Embryophyta</taxon>
        <taxon>Tracheophyta</taxon>
        <taxon>Lycopodiopsida</taxon>
        <taxon>Selaginellales</taxon>
        <taxon>Selaginellaceae</taxon>
        <taxon>Selaginella</taxon>
    </lineage>
</organism>
<evidence type="ECO:0000255" key="1">
    <source>
        <dbReference type="HAMAP-Rule" id="MF_01379"/>
    </source>
</evidence>
<sequence length="354" mass="38909">MTATLERRENASLWGNFCDWITSTENRLYIGWFGVLMIPTLLTATSVFITAFIAAPPVDIDGIREPVSGSLLYGNNIISGAIIPTSAAIGLHFYPIWEAASIDEWLYNGGPYELIVLHFLLGVACYMGREWELSFRLGMRPWIAVAYSAPVAAATAVFLIYPIGQGSFSDGMPLGISGTFNFMIVFQAEHNILMHPFHMLGVAGVFGGSLFSAMHGSLVTSSLIRETTENESANAGYRFGQEEETYNIVAAHGYFGRLIFQYASFNNSRSLHFFLAAWPVVGIWFTALGISTMAFNLNGFNFNQSVVDSQGRVINTWADIINRANLGMEVMHERNAHNFPLDLAASIEAPSLNG</sequence>
<comment type="function">
    <text evidence="1">Photosystem II (PSII) is a light-driven water:plastoquinone oxidoreductase that uses light energy to abstract electrons from H(2)O, generating O(2) and a proton gradient subsequently used for ATP formation. It consists of a core antenna complex that captures photons, and an electron transfer chain that converts photonic excitation into a charge separation. The D1/D2 (PsbA/PsbD) reaction center heterodimer binds P680, the primary electron donor of PSII as well as several subsequent electron acceptors.</text>
</comment>
<comment type="catalytic activity">
    <reaction evidence="1">
        <text>2 a plastoquinone + 4 hnu + 2 H2O = 2 a plastoquinol + O2</text>
        <dbReference type="Rhea" id="RHEA:36359"/>
        <dbReference type="Rhea" id="RHEA-COMP:9561"/>
        <dbReference type="Rhea" id="RHEA-COMP:9562"/>
        <dbReference type="ChEBI" id="CHEBI:15377"/>
        <dbReference type="ChEBI" id="CHEBI:15379"/>
        <dbReference type="ChEBI" id="CHEBI:17757"/>
        <dbReference type="ChEBI" id="CHEBI:30212"/>
        <dbReference type="ChEBI" id="CHEBI:62192"/>
        <dbReference type="EC" id="1.10.3.9"/>
    </reaction>
</comment>
<comment type="cofactor">
    <text evidence="1">The D1/D2 heterodimer binds P680, chlorophylls that are the primary electron donor of PSII, and subsequent electron acceptors. It shares a non-heme iron and each subunit binds pheophytin, quinone, additional chlorophylls, carotenoids and lipids. D1 provides most of the ligands for the Mn4-Ca-O5 cluster of the oxygen-evolving complex (OEC). There is also a Cl(-1) ion associated with D1 and D2, which is required for oxygen evolution. The PSII complex binds additional chlorophylls, carotenoids and specific lipids.</text>
</comment>
<comment type="subunit">
    <text evidence="1">PSII is composed of 1 copy each of membrane proteins PsbA, PsbB, PsbC, PsbD, PsbE, PsbF, PsbH, PsbI, PsbJ, PsbK, PsbL, PsbM, PsbT, PsbX, PsbY, PsbZ, Psb30/Ycf12, at least 3 peripheral proteins of the oxygen-evolving complex and a large number of cofactors. It forms dimeric complexes.</text>
</comment>
<comment type="subcellular location">
    <subcellularLocation>
        <location evidence="1">Plastid</location>
        <location evidence="1">Chloroplast thylakoid membrane</location>
        <topology evidence="1">Multi-pass membrane protein</topology>
    </subcellularLocation>
</comment>
<comment type="PTM">
    <text evidence="1">Tyr-161 forms a radical intermediate that is referred to as redox-active TyrZ, YZ or Y-Z.</text>
</comment>
<comment type="PTM">
    <text evidence="1">C-terminally processed by CTPA; processing is essential to allow assembly of the oxygen-evolving complex and thus photosynthetic growth.</text>
</comment>
<comment type="miscellaneous">
    <text evidence="1">2 of the reaction center chlorophylls (ChlD1 and ChlD2) are entirely coordinated by water.</text>
</comment>
<comment type="miscellaneous">
    <text evidence="1">Herbicides such as atrazine, BNT, diuron or ioxynil bind in the Q(B) binding site and block subsequent electron transfer.</text>
</comment>
<comment type="similarity">
    <text evidence="1">Belongs to the reaction center PufL/M/PsbA/D family.</text>
</comment>